<gene>
    <name type="primary">Cxxc1</name>
    <name type="synonym">Cgbp</name>
    <name type="synonym">Pccx1</name>
</gene>
<evidence type="ECO:0000250" key="1"/>
<evidence type="ECO:0000250" key="2">
    <source>
        <dbReference type="UniProtKB" id="Q9P0U4"/>
    </source>
</evidence>
<evidence type="ECO:0000255" key="3"/>
<evidence type="ECO:0000255" key="4">
    <source>
        <dbReference type="PROSITE-ProRule" id="PRU00146"/>
    </source>
</evidence>
<evidence type="ECO:0000255" key="5">
    <source>
        <dbReference type="PROSITE-ProRule" id="PRU00509"/>
    </source>
</evidence>
<evidence type="ECO:0000256" key="6">
    <source>
        <dbReference type="SAM" id="MobiDB-lite"/>
    </source>
</evidence>
<evidence type="ECO:0000269" key="7">
    <source>
    </source>
</evidence>
<evidence type="ECO:0000269" key="8">
    <source>
    </source>
</evidence>
<protein>
    <recommendedName>
        <fullName>CXXC-type zinc finger protein 1</fullName>
    </recommendedName>
    <alternativeName>
        <fullName>CpG-binding protein</fullName>
    </alternativeName>
    <alternativeName>
        <fullName>PHD finger and CXXC domain-containing protein 1</fullName>
    </alternativeName>
</protein>
<sequence>MEGDGSDLEPPDAGDDSKSENGENAPIYCICRKPDINCFMIGCDNCNEWFHGDCIRITEKMAKAIREWYCRECREKDPKLEIRYRHKKCRERDGSERAGSEPRDEGGGRKRPASDPELQRRAGSGTGVGAMLARGSASPHKSSPQPLVATPSQHHHQQQQQQQQQIKRSARMCGECEACRRTEDCGHCDFCRDMKKFGGPNKIRQKCRLRQCQLRARESYKYFPSSLSPVTPSEALPRPRRPPPTQQQPQQSQKLGRIREDEGTVLSSVVKEPPEATATPEPLSDEDLALDPDLYQDFCAGAFDDHGLPWMSDAEESPFLDPALRKRAVKVKHVKRREKKSEKKKEERYKRHRQKQKHKDKWKHPERADAKDPASLPQCLGPGCVRAAQPGSKYCSDDCGMKLAANRIYEILPQRIQQWQQSPCIAEEHGKKLLERIRREQQSARTRLQEMERRFHELEAIILRAKQQAVREDEENNENDSDDTDLQIFCVSCGHPINPRVALRHMERCYAKYESQTSFGSMYPTRIEGATRLFCDVYNPQSKTYCKRLQVLCPEHSRDPKVPADEVCGCPLVRDVFELTGDFCRLPKRQCNRHYCWEKLRRAEVDLERVRVWYKLDELFEQERNVRTAMTNRAGLLALMLHQTIQHDPLTTDLRSSADR</sequence>
<accession>Q9CWW7</accession>
<dbReference type="EMBL" id="AK010337">
    <property type="protein sequence ID" value="BAB26862.1"/>
    <property type="molecule type" value="mRNA"/>
</dbReference>
<dbReference type="EMBL" id="AK083655">
    <property type="protein sequence ID" value="BAC38986.1"/>
    <property type="molecule type" value="mRNA"/>
</dbReference>
<dbReference type="EMBL" id="BC030938">
    <property type="protein sequence ID" value="AAH30938.1"/>
    <property type="molecule type" value="mRNA"/>
</dbReference>
<dbReference type="CCDS" id="CCDS50320.1"/>
<dbReference type="RefSeq" id="NP_083144.1">
    <property type="nucleotide sequence ID" value="NM_028868.3"/>
</dbReference>
<dbReference type="SMR" id="Q9CWW7"/>
<dbReference type="BioGRID" id="216665">
    <property type="interactions" value="32"/>
</dbReference>
<dbReference type="FunCoup" id="Q9CWW7">
    <property type="interactions" value="3665"/>
</dbReference>
<dbReference type="IntAct" id="Q9CWW7">
    <property type="interactions" value="24"/>
</dbReference>
<dbReference type="MINT" id="Q9CWW7"/>
<dbReference type="STRING" id="10090.ENSMUSP00000025444"/>
<dbReference type="GlyGen" id="Q9CWW7">
    <property type="glycosylation" value="2 sites, 1 O-linked glycan (1 site)"/>
</dbReference>
<dbReference type="iPTMnet" id="Q9CWW7"/>
<dbReference type="PhosphoSitePlus" id="Q9CWW7"/>
<dbReference type="SwissPalm" id="Q9CWW7"/>
<dbReference type="jPOST" id="Q9CWW7"/>
<dbReference type="PaxDb" id="10090-ENSMUSP00000025444"/>
<dbReference type="ProteomicsDB" id="279228"/>
<dbReference type="Pumba" id="Q9CWW7"/>
<dbReference type="Antibodypedia" id="9406">
    <property type="antibodies" value="273 antibodies from 29 providers"/>
</dbReference>
<dbReference type="Ensembl" id="ENSMUST00000025444.8">
    <property type="protein sequence ID" value="ENSMUSP00000025444.7"/>
    <property type="gene ID" value="ENSMUSG00000024560.8"/>
</dbReference>
<dbReference type="GeneID" id="74322"/>
<dbReference type="KEGG" id="mmu:74322"/>
<dbReference type="UCSC" id="uc008fpg.1">
    <property type="organism name" value="mouse"/>
</dbReference>
<dbReference type="AGR" id="MGI:1921572"/>
<dbReference type="CTD" id="30827"/>
<dbReference type="MGI" id="MGI:1921572">
    <property type="gene designation" value="Cxxc1"/>
</dbReference>
<dbReference type="VEuPathDB" id="HostDB:ENSMUSG00000024560"/>
<dbReference type="eggNOG" id="KOG1632">
    <property type="taxonomic scope" value="Eukaryota"/>
</dbReference>
<dbReference type="GeneTree" id="ENSGT00730000111044"/>
<dbReference type="HOGENOM" id="CLU_025011_2_0_1"/>
<dbReference type="InParanoid" id="Q9CWW7"/>
<dbReference type="OMA" id="IRVGHKP"/>
<dbReference type="PhylomeDB" id="Q9CWW7"/>
<dbReference type="TreeFam" id="TF320326"/>
<dbReference type="Reactome" id="R-MMU-9772755">
    <property type="pathway name" value="Formation of WDR5-containing histone-modifying complexes"/>
</dbReference>
<dbReference type="BioGRID-ORCS" id="74322">
    <property type="hits" value="13 hits in 85 CRISPR screens"/>
</dbReference>
<dbReference type="ChiTaRS" id="Cxxc1">
    <property type="organism name" value="mouse"/>
</dbReference>
<dbReference type="PRO" id="PR:Q9CWW7"/>
<dbReference type="Proteomes" id="UP000000589">
    <property type="component" value="Chromosome 18"/>
</dbReference>
<dbReference type="RNAct" id="Q9CWW7">
    <property type="molecule type" value="protein"/>
</dbReference>
<dbReference type="Bgee" id="ENSMUSG00000024560">
    <property type="expression patterns" value="Expressed in ileal epithelium and 271 other cell types or tissues"/>
</dbReference>
<dbReference type="ExpressionAtlas" id="Q9CWW7">
    <property type="expression patterns" value="baseline and differential"/>
</dbReference>
<dbReference type="GO" id="GO:0005829">
    <property type="term" value="C:cytosol"/>
    <property type="evidence" value="ECO:0007669"/>
    <property type="project" value="Ensembl"/>
</dbReference>
<dbReference type="GO" id="GO:0016363">
    <property type="term" value="C:nuclear matrix"/>
    <property type="evidence" value="ECO:0000314"/>
    <property type="project" value="MGI"/>
</dbReference>
<dbReference type="GO" id="GO:0016607">
    <property type="term" value="C:nuclear speck"/>
    <property type="evidence" value="ECO:0007669"/>
    <property type="project" value="UniProtKB-SubCell"/>
</dbReference>
<dbReference type="GO" id="GO:0005634">
    <property type="term" value="C:nucleus"/>
    <property type="evidence" value="ECO:0000314"/>
    <property type="project" value="UniProtKB"/>
</dbReference>
<dbReference type="GO" id="GO:0048188">
    <property type="term" value="C:Set1C/COMPASS complex"/>
    <property type="evidence" value="ECO:0000250"/>
    <property type="project" value="UniProtKB"/>
</dbReference>
<dbReference type="GO" id="GO:0000987">
    <property type="term" value="F:cis-regulatory region sequence-specific DNA binding"/>
    <property type="evidence" value="ECO:0007669"/>
    <property type="project" value="Ensembl"/>
</dbReference>
<dbReference type="GO" id="GO:0140002">
    <property type="term" value="F:histone H3K4me3 reader activity"/>
    <property type="evidence" value="ECO:0000314"/>
    <property type="project" value="UniProtKB"/>
</dbReference>
<dbReference type="GO" id="GO:0045322">
    <property type="term" value="F:unmethylated CpG binding"/>
    <property type="evidence" value="ECO:0007669"/>
    <property type="project" value="Ensembl"/>
</dbReference>
<dbReference type="GO" id="GO:0008270">
    <property type="term" value="F:zinc ion binding"/>
    <property type="evidence" value="ECO:0007669"/>
    <property type="project" value="UniProtKB-KW"/>
</dbReference>
<dbReference type="GO" id="GO:0045893">
    <property type="term" value="P:positive regulation of DNA-templated transcription"/>
    <property type="evidence" value="ECO:0007669"/>
    <property type="project" value="Ensembl"/>
</dbReference>
<dbReference type="CDD" id="cd15553">
    <property type="entry name" value="PHD_Cfp1"/>
    <property type="match status" value="1"/>
</dbReference>
<dbReference type="FunFam" id="3.30.40.10:FF:000138">
    <property type="entry name" value="CXXC-type zinc finger protein 1"/>
    <property type="match status" value="1"/>
</dbReference>
<dbReference type="Gene3D" id="3.30.40.10">
    <property type="entry name" value="Zinc/RING finger domain, C3HC4 (zinc finger)"/>
    <property type="match status" value="1"/>
</dbReference>
<dbReference type="InterPro" id="IPR022056">
    <property type="entry name" value="CpG-bd_C"/>
</dbReference>
<dbReference type="InterPro" id="IPR037869">
    <property type="entry name" value="Spp1/CFP1"/>
</dbReference>
<dbReference type="InterPro" id="IPR019786">
    <property type="entry name" value="Zinc_finger_PHD-type_CS"/>
</dbReference>
<dbReference type="InterPro" id="IPR002857">
    <property type="entry name" value="Znf_CXXC"/>
</dbReference>
<dbReference type="InterPro" id="IPR011011">
    <property type="entry name" value="Znf_FYVE_PHD"/>
</dbReference>
<dbReference type="InterPro" id="IPR001965">
    <property type="entry name" value="Znf_PHD"/>
</dbReference>
<dbReference type="InterPro" id="IPR019787">
    <property type="entry name" value="Znf_PHD-finger"/>
</dbReference>
<dbReference type="InterPro" id="IPR013083">
    <property type="entry name" value="Znf_RING/FYVE/PHD"/>
</dbReference>
<dbReference type="PANTHER" id="PTHR46174">
    <property type="entry name" value="CXXC-TYPE ZINC FINGER PROTEIN 1"/>
    <property type="match status" value="1"/>
</dbReference>
<dbReference type="PANTHER" id="PTHR46174:SF1">
    <property type="entry name" value="CXXC-TYPE ZINC FINGER PROTEIN 1"/>
    <property type="match status" value="1"/>
</dbReference>
<dbReference type="Pfam" id="PF12269">
    <property type="entry name" value="CpG_bind_C"/>
    <property type="match status" value="1"/>
</dbReference>
<dbReference type="Pfam" id="PF00628">
    <property type="entry name" value="PHD"/>
    <property type="match status" value="1"/>
</dbReference>
<dbReference type="Pfam" id="PF02008">
    <property type="entry name" value="zf-CXXC"/>
    <property type="match status" value="1"/>
</dbReference>
<dbReference type="SMART" id="SM00249">
    <property type="entry name" value="PHD"/>
    <property type="match status" value="1"/>
</dbReference>
<dbReference type="SUPFAM" id="SSF57903">
    <property type="entry name" value="FYVE/PHD zinc finger"/>
    <property type="match status" value="1"/>
</dbReference>
<dbReference type="PROSITE" id="PS51058">
    <property type="entry name" value="ZF_CXXC"/>
    <property type="match status" value="1"/>
</dbReference>
<dbReference type="PROSITE" id="PS01359">
    <property type="entry name" value="ZF_PHD_1"/>
    <property type="match status" value="1"/>
</dbReference>
<dbReference type="PROSITE" id="PS50016">
    <property type="entry name" value="ZF_PHD_2"/>
    <property type="match status" value="1"/>
</dbReference>
<comment type="function">
    <text evidence="1">Transcriptional activator that exhibits a unique DNA binding specificity for CpG unmethylated motifs with a preference for CpGG.</text>
</comment>
<comment type="subunit">
    <text evidence="1 7 8">Component of the SET1 complex, at least composed of the catalytic subunit (SETD1A or SETD1B), WDR5, WDR82, RBBP5, ASH2L/ASH2, CXXC1/CFP1, HCFC1 and DPY30. Interacts with SETD1A (By similarity). Interacts with ZNF335 (By similarity). Interacts with PRDM9; this interaction does not link PRDM9-activated recombination hotspot sites with DSB machinery and is not required for the hotspot recognition pathway (PubMed:27932493, PubMed:30365547). Interacts with histone H3K4me3 (PubMed:30365547).</text>
</comment>
<comment type="subcellular location">
    <subcellularLocation>
        <location evidence="2">Nucleus speckle</location>
    </subcellularLocation>
    <subcellularLocation>
        <location evidence="8">Nucleus</location>
    </subcellularLocation>
    <text evidence="2">Associated with euchromatin. During mitosis, excluded from condensed chromosomes (By similarity).</text>
</comment>
<comment type="tissue specificity">
    <text evidence="8">Expressed in seminiferous tubules and in both germ cells and Sertoli cells. Highly expressed in spermatogonia, weakly expressed in leptonema and zygonema, and then again high expression in pachynema and diplonema, decreasing to undetectable levels in spermatids.</text>
</comment>
<comment type="disruption phenotype">
    <text evidence="8">Cxxc1 knockout male mice are fertile. In contrast Cxxc1 germ cell-specific knockout female mice are sterile.</text>
</comment>
<keyword id="KW-0007">Acetylation</keyword>
<keyword id="KW-0010">Activator</keyword>
<keyword id="KW-0175">Coiled coil</keyword>
<keyword id="KW-0238">DNA-binding</keyword>
<keyword id="KW-1017">Isopeptide bond</keyword>
<keyword id="KW-0479">Metal-binding</keyword>
<keyword id="KW-0539">Nucleus</keyword>
<keyword id="KW-0597">Phosphoprotein</keyword>
<keyword id="KW-1185">Reference proteome</keyword>
<keyword id="KW-0804">Transcription</keyword>
<keyword id="KW-0805">Transcription regulation</keyword>
<keyword id="KW-0832">Ubl conjugation</keyword>
<keyword id="KW-0862">Zinc</keyword>
<keyword id="KW-0863">Zinc-finger</keyword>
<name>CXXC1_MOUSE</name>
<feature type="chain" id="PRO_0000079744" description="CXXC-type zinc finger protein 1">
    <location>
        <begin position="1"/>
        <end position="660"/>
    </location>
</feature>
<feature type="zinc finger region" description="PHD-type" evidence="4">
    <location>
        <begin position="28"/>
        <end position="76"/>
    </location>
</feature>
<feature type="zinc finger region" description="CXXC-type" evidence="5">
    <location>
        <begin position="164"/>
        <end position="213"/>
    </location>
</feature>
<feature type="region of interest" description="Disordered" evidence="6">
    <location>
        <begin position="1"/>
        <end position="20"/>
    </location>
</feature>
<feature type="region of interest" description="Disordered" evidence="6">
    <location>
        <begin position="91"/>
        <end position="166"/>
    </location>
</feature>
<feature type="region of interest" description="Disordered" evidence="6">
    <location>
        <begin position="223"/>
        <end position="287"/>
    </location>
</feature>
<feature type="region of interest" description="Disordered" evidence="6">
    <location>
        <begin position="328"/>
        <end position="375"/>
    </location>
</feature>
<feature type="coiled-coil region" evidence="3">
    <location>
        <begin position="426"/>
        <end position="479"/>
    </location>
</feature>
<feature type="compositionally biased region" description="Acidic residues" evidence="6">
    <location>
        <begin position="1"/>
        <end position="14"/>
    </location>
</feature>
<feature type="compositionally biased region" description="Basic and acidic residues" evidence="6">
    <location>
        <begin position="91"/>
        <end position="120"/>
    </location>
</feature>
<feature type="compositionally biased region" description="Basic residues" evidence="6">
    <location>
        <begin position="328"/>
        <end position="338"/>
    </location>
</feature>
<feature type="compositionally biased region" description="Basic and acidic residues" evidence="6">
    <location>
        <begin position="339"/>
        <end position="349"/>
    </location>
</feature>
<feature type="compositionally biased region" description="Basic residues" evidence="6">
    <location>
        <begin position="350"/>
        <end position="362"/>
    </location>
</feature>
<feature type="compositionally biased region" description="Basic and acidic residues" evidence="6">
    <location>
        <begin position="363"/>
        <end position="372"/>
    </location>
</feature>
<feature type="binding site" evidence="5">
    <location>
        <position position="173"/>
    </location>
    <ligand>
        <name>Zn(2+)</name>
        <dbReference type="ChEBI" id="CHEBI:29105"/>
        <label>1</label>
    </ligand>
</feature>
<feature type="binding site" evidence="5">
    <location>
        <position position="176"/>
    </location>
    <ligand>
        <name>Zn(2+)</name>
        <dbReference type="ChEBI" id="CHEBI:29105"/>
        <label>1</label>
    </ligand>
</feature>
<feature type="binding site" evidence="5">
    <location>
        <position position="179"/>
    </location>
    <ligand>
        <name>Zn(2+)</name>
        <dbReference type="ChEBI" id="CHEBI:29105"/>
        <label>1</label>
    </ligand>
</feature>
<feature type="binding site" evidence="5">
    <location>
        <position position="185"/>
    </location>
    <ligand>
        <name>Zn(2+)</name>
        <dbReference type="ChEBI" id="CHEBI:29105"/>
        <label>2</label>
    </ligand>
</feature>
<feature type="binding site" evidence="5">
    <location>
        <position position="188"/>
    </location>
    <ligand>
        <name>Zn(2+)</name>
        <dbReference type="ChEBI" id="CHEBI:29105"/>
        <label>2</label>
    </ligand>
</feature>
<feature type="binding site" evidence="5">
    <location>
        <position position="191"/>
    </location>
    <ligand>
        <name>Zn(2+)</name>
        <dbReference type="ChEBI" id="CHEBI:29105"/>
        <label>2</label>
    </ligand>
</feature>
<feature type="binding site" evidence="5">
    <location>
        <position position="207"/>
    </location>
    <ligand>
        <name>Zn(2+)</name>
        <dbReference type="ChEBI" id="CHEBI:29105"/>
        <label>2</label>
    </ligand>
</feature>
<feature type="binding site" evidence="5">
    <location>
        <position position="212"/>
    </location>
    <ligand>
        <name>Zn(2+)</name>
        <dbReference type="ChEBI" id="CHEBI:29105"/>
        <label>1</label>
    </ligand>
</feature>
<feature type="modified residue" description="N-acetylmethionine" evidence="2">
    <location>
        <position position="1"/>
    </location>
</feature>
<feature type="modified residue" description="Phosphoserine" evidence="2">
    <location>
        <position position="6"/>
    </location>
</feature>
<feature type="modified residue" description="Phosphoserine" evidence="2">
    <location>
        <position position="19"/>
    </location>
</feature>
<feature type="modified residue" description="Phosphoserine" evidence="2">
    <location>
        <position position="124"/>
    </location>
</feature>
<feature type="modified residue" description="Phosphoserine" evidence="2">
    <location>
        <position position="228"/>
    </location>
</feature>
<feature type="modified residue" description="Phosphothreonine" evidence="2">
    <location>
        <position position="231"/>
    </location>
</feature>
<feature type="cross-link" description="Glycyl lysine isopeptide (Lys-Gly) (interchain with G-Cter in SUMO2)" evidence="2">
    <location>
        <position position="254"/>
    </location>
</feature>
<organism>
    <name type="scientific">Mus musculus</name>
    <name type="common">Mouse</name>
    <dbReference type="NCBI Taxonomy" id="10090"/>
    <lineage>
        <taxon>Eukaryota</taxon>
        <taxon>Metazoa</taxon>
        <taxon>Chordata</taxon>
        <taxon>Craniata</taxon>
        <taxon>Vertebrata</taxon>
        <taxon>Euteleostomi</taxon>
        <taxon>Mammalia</taxon>
        <taxon>Eutheria</taxon>
        <taxon>Euarchontoglires</taxon>
        <taxon>Glires</taxon>
        <taxon>Rodentia</taxon>
        <taxon>Myomorpha</taxon>
        <taxon>Muroidea</taxon>
        <taxon>Muridae</taxon>
        <taxon>Murinae</taxon>
        <taxon>Mus</taxon>
        <taxon>Mus</taxon>
    </lineage>
</organism>
<proteinExistence type="evidence at protein level"/>
<reference key="1">
    <citation type="journal article" date="2005" name="Science">
        <title>The transcriptional landscape of the mammalian genome.</title>
        <authorList>
            <person name="Carninci P."/>
            <person name="Kasukawa T."/>
            <person name="Katayama S."/>
            <person name="Gough J."/>
            <person name="Frith M.C."/>
            <person name="Maeda N."/>
            <person name="Oyama R."/>
            <person name="Ravasi T."/>
            <person name="Lenhard B."/>
            <person name="Wells C."/>
            <person name="Kodzius R."/>
            <person name="Shimokawa K."/>
            <person name="Bajic V.B."/>
            <person name="Brenner S.E."/>
            <person name="Batalov S."/>
            <person name="Forrest A.R."/>
            <person name="Zavolan M."/>
            <person name="Davis M.J."/>
            <person name="Wilming L.G."/>
            <person name="Aidinis V."/>
            <person name="Allen J.E."/>
            <person name="Ambesi-Impiombato A."/>
            <person name="Apweiler R."/>
            <person name="Aturaliya R.N."/>
            <person name="Bailey T.L."/>
            <person name="Bansal M."/>
            <person name="Baxter L."/>
            <person name="Beisel K.W."/>
            <person name="Bersano T."/>
            <person name="Bono H."/>
            <person name="Chalk A.M."/>
            <person name="Chiu K.P."/>
            <person name="Choudhary V."/>
            <person name="Christoffels A."/>
            <person name="Clutterbuck D.R."/>
            <person name="Crowe M.L."/>
            <person name="Dalla E."/>
            <person name="Dalrymple B.P."/>
            <person name="de Bono B."/>
            <person name="Della Gatta G."/>
            <person name="di Bernardo D."/>
            <person name="Down T."/>
            <person name="Engstrom P."/>
            <person name="Fagiolini M."/>
            <person name="Faulkner G."/>
            <person name="Fletcher C.F."/>
            <person name="Fukushima T."/>
            <person name="Furuno M."/>
            <person name="Futaki S."/>
            <person name="Gariboldi M."/>
            <person name="Georgii-Hemming P."/>
            <person name="Gingeras T.R."/>
            <person name="Gojobori T."/>
            <person name="Green R.E."/>
            <person name="Gustincich S."/>
            <person name="Harbers M."/>
            <person name="Hayashi Y."/>
            <person name="Hensch T.K."/>
            <person name="Hirokawa N."/>
            <person name="Hill D."/>
            <person name="Huminiecki L."/>
            <person name="Iacono M."/>
            <person name="Ikeo K."/>
            <person name="Iwama A."/>
            <person name="Ishikawa T."/>
            <person name="Jakt M."/>
            <person name="Kanapin A."/>
            <person name="Katoh M."/>
            <person name="Kawasawa Y."/>
            <person name="Kelso J."/>
            <person name="Kitamura H."/>
            <person name="Kitano H."/>
            <person name="Kollias G."/>
            <person name="Krishnan S.P."/>
            <person name="Kruger A."/>
            <person name="Kummerfeld S.K."/>
            <person name="Kurochkin I.V."/>
            <person name="Lareau L.F."/>
            <person name="Lazarevic D."/>
            <person name="Lipovich L."/>
            <person name="Liu J."/>
            <person name="Liuni S."/>
            <person name="McWilliam S."/>
            <person name="Madan Babu M."/>
            <person name="Madera M."/>
            <person name="Marchionni L."/>
            <person name="Matsuda H."/>
            <person name="Matsuzawa S."/>
            <person name="Miki H."/>
            <person name="Mignone F."/>
            <person name="Miyake S."/>
            <person name="Morris K."/>
            <person name="Mottagui-Tabar S."/>
            <person name="Mulder N."/>
            <person name="Nakano N."/>
            <person name="Nakauchi H."/>
            <person name="Ng P."/>
            <person name="Nilsson R."/>
            <person name="Nishiguchi S."/>
            <person name="Nishikawa S."/>
            <person name="Nori F."/>
            <person name="Ohara O."/>
            <person name="Okazaki Y."/>
            <person name="Orlando V."/>
            <person name="Pang K.C."/>
            <person name="Pavan W.J."/>
            <person name="Pavesi G."/>
            <person name="Pesole G."/>
            <person name="Petrovsky N."/>
            <person name="Piazza S."/>
            <person name="Reed J."/>
            <person name="Reid J.F."/>
            <person name="Ring B.Z."/>
            <person name="Ringwald M."/>
            <person name="Rost B."/>
            <person name="Ruan Y."/>
            <person name="Salzberg S.L."/>
            <person name="Sandelin A."/>
            <person name="Schneider C."/>
            <person name="Schoenbach C."/>
            <person name="Sekiguchi K."/>
            <person name="Semple C.A."/>
            <person name="Seno S."/>
            <person name="Sessa L."/>
            <person name="Sheng Y."/>
            <person name="Shibata Y."/>
            <person name="Shimada H."/>
            <person name="Shimada K."/>
            <person name="Silva D."/>
            <person name="Sinclair B."/>
            <person name="Sperling S."/>
            <person name="Stupka E."/>
            <person name="Sugiura K."/>
            <person name="Sultana R."/>
            <person name="Takenaka Y."/>
            <person name="Taki K."/>
            <person name="Tammoja K."/>
            <person name="Tan S.L."/>
            <person name="Tang S."/>
            <person name="Taylor M.S."/>
            <person name="Tegner J."/>
            <person name="Teichmann S.A."/>
            <person name="Ueda H.R."/>
            <person name="van Nimwegen E."/>
            <person name="Verardo R."/>
            <person name="Wei C.L."/>
            <person name="Yagi K."/>
            <person name="Yamanishi H."/>
            <person name="Zabarovsky E."/>
            <person name="Zhu S."/>
            <person name="Zimmer A."/>
            <person name="Hide W."/>
            <person name="Bult C."/>
            <person name="Grimmond S.M."/>
            <person name="Teasdale R.D."/>
            <person name="Liu E.T."/>
            <person name="Brusic V."/>
            <person name="Quackenbush J."/>
            <person name="Wahlestedt C."/>
            <person name="Mattick J.S."/>
            <person name="Hume D.A."/>
            <person name="Kai C."/>
            <person name="Sasaki D."/>
            <person name="Tomaru Y."/>
            <person name="Fukuda S."/>
            <person name="Kanamori-Katayama M."/>
            <person name="Suzuki M."/>
            <person name="Aoki J."/>
            <person name="Arakawa T."/>
            <person name="Iida J."/>
            <person name="Imamura K."/>
            <person name="Itoh M."/>
            <person name="Kato T."/>
            <person name="Kawaji H."/>
            <person name="Kawagashira N."/>
            <person name="Kawashima T."/>
            <person name="Kojima M."/>
            <person name="Kondo S."/>
            <person name="Konno H."/>
            <person name="Nakano K."/>
            <person name="Ninomiya N."/>
            <person name="Nishio T."/>
            <person name="Okada M."/>
            <person name="Plessy C."/>
            <person name="Shibata K."/>
            <person name="Shiraki T."/>
            <person name="Suzuki S."/>
            <person name="Tagami M."/>
            <person name="Waki K."/>
            <person name="Watahiki A."/>
            <person name="Okamura-Oho Y."/>
            <person name="Suzuki H."/>
            <person name="Kawai J."/>
            <person name="Hayashizaki Y."/>
        </authorList>
    </citation>
    <scope>NUCLEOTIDE SEQUENCE [LARGE SCALE MRNA]</scope>
    <source>
        <strain>C57BL/6J</strain>
        <tissue>Embryonic stem cell</tissue>
    </source>
</reference>
<reference key="2">
    <citation type="journal article" date="2004" name="Genome Res.">
        <title>The status, quality, and expansion of the NIH full-length cDNA project: the Mammalian Gene Collection (MGC).</title>
        <authorList>
            <consortium name="The MGC Project Team"/>
        </authorList>
    </citation>
    <scope>NUCLEOTIDE SEQUENCE [LARGE SCALE MRNA]</scope>
    <source>
        <strain>FVB/N</strain>
        <tissue>Mammary gland</tissue>
    </source>
</reference>
<reference key="3">
    <citation type="journal article" date="2017" name="Mol. Biol. Cell">
        <title>PRDM9 interactions with other proteins provide a link between recombination hotspots and the chromosomal axis in meiosis.</title>
        <authorList>
            <person name="Parvanov E.D."/>
            <person name="Tian H."/>
            <person name="Billings T."/>
            <person name="Saxl R.L."/>
            <person name="Spruce C."/>
            <person name="Aithal R."/>
            <person name="Krejci L."/>
            <person name="Paigen K."/>
            <person name="Petkov P.M."/>
        </authorList>
    </citation>
    <scope>INTERACTION WITH PRDM9</scope>
</reference>
<reference key="4">
    <citation type="journal article" date="2018" name="PLoS Genet.">
        <title>CXXC1 is not essential for normal DNA double-strand break formation and meiotic recombination in mouse.</title>
        <authorList>
            <person name="Tian H."/>
            <person name="Billings T."/>
            <person name="Petkov P.M."/>
        </authorList>
    </citation>
    <scope>INTERACTION WITH PRDM9 AND METHYLATED HISTONE H3K4ME3</scope>
    <scope>SUBCELLULAR LOCATION</scope>
    <scope>DISRUPTION PHENOTYPE</scope>
    <scope>TISSUE SPECIFICITY</scope>
</reference>